<dbReference type="EMBL" id="CP000681">
    <property type="protein sequence ID" value="ABP74896.1"/>
    <property type="molecule type" value="Genomic_DNA"/>
</dbReference>
<dbReference type="SMR" id="A4Y4L3"/>
<dbReference type="STRING" id="319224.Sputcn32_1168"/>
<dbReference type="KEGG" id="spc:Sputcn32_1168"/>
<dbReference type="eggNOG" id="COG0228">
    <property type="taxonomic scope" value="Bacteria"/>
</dbReference>
<dbReference type="HOGENOM" id="CLU_100590_5_1_6"/>
<dbReference type="GO" id="GO:0005737">
    <property type="term" value="C:cytoplasm"/>
    <property type="evidence" value="ECO:0007669"/>
    <property type="project" value="UniProtKB-ARBA"/>
</dbReference>
<dbReference type="GO" id="GO:0015935">
    <property type="term" value="C:small ribosomal subunit"/>
    <property type="evidence" value="ECO:0007669"/>
    <property type="project" value="TreeGrafter"/>
</dbReference>
<dbReference type="GO" id="GO:0003735">
    <property type="term" value="F:structural constituent of ribosome"/>
    <property type="evidence" value="ECO:0007669"/>
    <property type="project" value="InterPro"/>
</dbReference>
<dbReference type="GO" id="GO:0006412">
    <property type="term" value="P:translation"/>
    <property type="evidence" value="ECO:0007669"/>
    <property type="project" value="UniProtKB-UniRule"/>
</dbReference>
<dbReference type="FunFam" id="3.30.1320.10:FF:000001">
    <property type="entry name" value="30S ribosomal protein S16"/>
    <property type="match status" value="1"/>
</dbReference>
<dbReference type="Gene3D" id="3.30.1320.10">
    <property type="match status" value="1"/>
</dbReference>
<dbReference type="HAMAP" id="MF_00385">
    <property type="entry name" value="Ribosomal_bS16"/>
    <property type="match status" value="1"/>
</dbReference>
<dbReference type="InterPro" id="IPR000307">
    <property type="entry name" value="Ribosomal_bS16"/>
</dbReference>
<dbReference type="InterPro" id="IPR020592">
    <property type="entry name" value="Ribosomal_bS16_CS"/>
</dbReference>
<dbReference type="InterPro" id="IPR023803">
    <property type="entry name" value="Ribosomal_bS16_dom_sf"/>
</dbReference>
<dbReference type="NCBIfam" id="TIGR00002">
    <property type="entry name" value="S16"/>
    <property type="match status" value="1"/>
</dbReference>
<dbReference type="PANTHER" id="PTHR12919">
    <property type="entry name" value="30S RIBOSOMAL PROTEIN S16"/>
    <property type="match status" value="1"/>
</dbReference>
<dbReference type="PANTHER" id="PTHR12919:SF20">
    <property type="entry name" value="SMALL RIBOSOMAL SUBUNIT PROTEIN BS16M"/>
    <property type="match status" value="1"/>
</dbReference>
<dbReference type="Pfam" id="PF00886">
    <property type="entry name" value="Ribosomal_S16"/>
    <property type="match status" value="1"/>
</dbReference>
<dbReference type="SUPFAM" id="SSF54565">
    <property type="entry name" value="Ribosomal protein S16"/>
    <property type="match status" value="1"/>
</dbReference>
<dbReference type="PROSITE" id="PS00732">
    <property type="entry name" value="RIBOSOMAL_S16"/>
    <property type="match status" value="1"/>
</dbReference>
<proteinExistence type="inferred from homology"/>
<comment type="similarity">
    <text evidence="1">Belongs to the bacterial ribosomal protein bS16 family.</text>
</comment>
<name>RS16_SHEPC</name>
<organism>
    <name type="scientific">Shewanella putrefaciens (strain CN-32 / ATCC BAA-453)</name>
    <dbReference type="NCBI Taxonomy" id="319224"/>
    <lineage>
        <taxon>Bacteria</taxon>
        <taxon>Pseudomonadati</taxon>
        <taxon>Pseudomonadota</taxon>
        <taxon>Gammaproteobacteria</taxon>
        <taxon>Alteromonadales</taxon>
        <taxon>Shewanellaceae</taxon>
        <taxon>Shewanella</taxon>
    </lineage>
</organism>
<keyword id="KW-0687">Ribonucleoprotein</keyword>
<keyword id="KW-0689">Ribosomal protein</keyword>
<sequence length="83" mass="9325">MVTIRLARGGAKKRPFYNIVVADSRNARDGRFIERVGFFNPLARGQEETLRLDLARVEHWVSNGAATTERVAKLIKDARKATA</sequence>
<feature type="chain" id="PRO_1000049348" description="Small ribosomal subunit protein bS16">
    <location>
        <begin position="1"/>
        <end position="83"/>
    </location>
</feature>
<reference key="1">
    <citation type="submission" date="2007-04" db="EMBL/GenBank/DDBJ databases">
        <title>Complete sequence of Shewanella putrefaciens CN-32.</title>
        <authorList>
            <consortium name="US DOE Joint Genome Institute"/>
            <person name="Copeland A."/>
            <person name="Lucas S."/>
            <person name="Lapidus A."/>
            <person name="Barry K."/>
            <person name="Detter J.C."/>
            <person name="Glavina del Rio T."/>
            <person name="Hammon N."/>
            <person name="Israni S."/>
            <person name="Dalin E."/>
            <person name="Tice H."/>
            <person name="Pitluck S."/>
            <person name="Chain P."/>
            <person name="Malfatti S."/>
            <person name="Shin M."/>
            <person name="Vergez L."/>
            <person name="Schmutz J."/>
            <person name="Larimer F."/>
            <person name="Land M."/>
            <person name="Hauser L."/>
            <person name="Kyrpides N."/>
            <person name="Mikhailova N."/>
            <person name="Romine M.F."/>
            <person name="Fredrickson J."/>
            <person name="Tiedje J."/>
            <person name="Richardson P."/>
        </authorList>
    </citation>
    <scope>NUCLEOTIDE SEQUENCE [LARGE SCALE GENOMIC DNA]</scope>
    <source>
        <strain>CN-32 / ATCC BAA-453</strain>
    </source>
</reference>
<gene>
    <name evidence="1" type="primary">rpsP</name>
    <name type="ordered locus">Sputcn32_1168</name>
</gene>
<protein>
    <recommendedName>
        <fullName evidence="1">Small ribosomal subunit protein bS16</fullName>
    </recommendedName>
    <alternativeName>
        <fullName evidence="2">30S ribosomal protein S16</fullName>
    </alternativeName>
</protein>
<evidence type="ECO:0000255" key="1">
    <source>
        <dbReference type="HAMAP-Rule" id="MF_00385"/>
    </source>
</evidence>
<evidence type="ECO:0000305" key="2"/>
<accession>A4Y4L3</accession>